<protein>
    <recommendedName>
        <fullName>Lysostaphin resistance protein A</fullName>
    </recommendedName>
    <alternativeName>
        <fullName evidence="1">Surface protein display C</fullName>
    </alternativeName>
</protein>
<reference key="1">
    <citation type="journal article" date="2001" name="Lancet">
        <title>Whole genome sequencing of meticillin-resistant Staphylococcus aureus.</title>
        <authorList>
            <person name="Kuroda M."/>
            <person name="Ohta T."/>
            <person name="Uchiyama I."/>
            <person name="Baba T."/>
            <person name="Yuzawa H."/>
            <person name="Kobayashi I."/>
            <person name="Cui L."/>
            <person name="Oguchi A."/>
            <person name="Aoki K."/>
            <person name="Nagai Y."/>
            <person name="Lian J.-Q."/>
            <person name="Ito T."/>
            <person name="Kanamori M."/>
            <person name="Matsumaru H."/>
            <person name="Maruyama A."/>
            <person name="Murakami H."/>
            <person name="Hosoyama A."/>
            <person name="Mizutani-Ui Y."/>
            <person name="Takahashi N.K."/>
            <person name="Sawano T."/>
            <person name="Inoue R."/>
            <person name="Kaito C."/>
            <person name="Sekimizu K."/>
            <person name="Hirakawa H."/>
            <person name="Kuhara S."/>
            <person name="Goto S."/>
            <person name="Yabuzaki J."/>
            <person name="Kanehisa M."/>
            <person name="Yamashita A."/>
            <person name="Oshima K."/>
            <person name="Furuya K."/>
            <person name="Yoshino C."/>
            <person name="Shiba T."/>
            <person name="Hattori M."/>
            <person name="Ogasawara N."/>
            <person name="Hayashi H."/>
            <person name="Hiramatsu K."/>
        </authorList>
    </citation>
    <scope>NUCLEOTIDE SEQUENCE [LARGE SCALE GENOMIC DNA]</scope>
    <source>
        <strain>Mu50 / ATCC 700699</strain>
    </source>
</reference>
<dbReference type="EMBL" id="BA000017">
    <property type="protein sequence ID" value="BAB58497.1"/>
    <property type="molecule type" value="Genomic_DNA"/>
</dbReference>
<dbReference type="RefSeq" id="WP_000794442.1">
    <property type="nucleotide sequence ID" value="NC_002758.2"/>
</dbReference>
<dbReference type="SMR" id="Q99RT8"/>
<dbReference type="KEGG" id="sav:SAV2335"/>
<dbReference type="HOGENOM" id="CLU_046135_0_0_9"/>
<dbReference type="Proteomes" id="UP000002481">
    <property type="component" value="Chromosome"/>
</dbReference>
<dbReference type="GO" id="GO:0005886">
    <property type="term" value="C:plasma membrane"/>
    <property type="evidence" value="ECO:0007669"/>
    <property type="project" value="UniProtKB-SubCell"/>
</dbReference>
<dbReference type="GO" id="GO:0004175">
    <property type="term" value="F:endopeptidase activity"/>
    <property type="evidence" value="ECO:0007669"/>
    <property type="project" value="UniProtKB-ARBA"/>
</dbReference>
<dbReference type="GO" id="GO:0080120">
    <property type="term" value="P:CAAX-box protein maturation"/>
    <property type="evidence" value="ECO:0007669"/>
    <property type="project" value="UniProtKB-ARBA"/>
</dbReference>
<dbReference type="InterPro" id="IPR003675">
    <property type="entry name" value="Rce1/LyrA-like_dom"/>
</dbReference>
<dbReference type="Pfam" id="PF02517">
    <property type="entry name" value="Rce1-like"/>
    <property type="match status" value="1"/>
</dbReference>
<comment type="function">
    <text evidence="1 2">Involved in bacterial cell envelope homeostasis. Regulates peptidoglycan processing by N-acetylglucosaminidase SagB, perhaps acting as a scaffold protein. Pleiotropic regulator of gene expression, probably acting via interactions with multiple two-component systems (By similarity). Plays a role in the abundant deposition of the immunoglobulin G-binding protein A (spa) at the cross-wall, a subcellular structure that initially arises from cytokinesis (By similarity).</text>
</comment>
<comment type="subunit">
    <text evidence="2">Interacts with N-acetylglucosaminidase SagB; interaction is direct and facilitates peptidoglycan processing. Interacts (via N-terminal region including transmembrane domains) with sensor protein kinase WalK (via N-terminal region including transmembrane domains). Interacts (via N-terminal region including transmembrane domains) with sensor protein kinase SaeS. Interacts with other histidine kinases, perhaps via their transmembrane domains.</text>
</comment>
<comment type="subcellular location">
    <subcellularLocation>
        <location evidence="2">Cell membrane</location>
        <topology evidence="2">Multi-pass membrane protein</topology>
    </subcellularLocation>
    <subcellularLocation>
        <location evidence="1">Secreted</location>
        <location evidence="1">Cell wall</location>
    </subcellularLocation>
    <subcellularLocation>
        <location evidence="2">Cell septum</location>
    </subcellularLocation>
    <text evidence="1">Localization to the cross-wall is enriched in dividing cells.</text>
</comment>
<comment type="domain">
    <text evidence="2">C-terminal region not involved in glucosaminidase activity of the SagB-SpdC/LyrA complex.</text>
</comment>
<comment type="similarity">
    <text evidence="5">Belongs to the LyrA family.</text>
</comment>
<evidence type="ECO:0000250" key="1">
    <source>
        <dbReference type="UniProtKB" id="A0A0H3KA40"/>
    </source>
</evidence>
<evidence type="ECO:0000250" key="2">
    <source>
        <dbReference type="UniProtKB" id="Q2FVT1"/>
    </source>
</evidence>
<evidence type="ECO:0000255" key="3"/>
<evidence type="ECO:0000256" key="4">
    <source>
        <dbReference type="SAM" id="MobiDB-lite"/>
    </source>
</evidence>
<evidence type="ECO:0000305" key="5"/>
<gene>
    <name type="primary">lyrA</name>
    <name evidence="1" type="synonym">spdC</name>
    <name type="ordered locus">SAV2335</name>
</gene>
<sequence>MKNNKISGFQWAMTIFVFFVITMALSIMLRDFQSIIGVKHFIFEVTDLAPLIAAIICILVFKYKKVQLAGLKFSISLKVIERLLLALILPLIILIIGMYSFNTFADSFILLQSTGLSVPITHILIGHILMAFVVEFGFRSYLQNIVETKMNTFFASIVVGLMYSVFSANTTYGTEFAAYNFLYTFSFSMILGELIRATKGRTIYIATTFHASMTFGLIFLFSEEIGDLFSIKVIAISTAIVAVGYIGLSLIIRGIAYLTTRRNLEELEPNNYLDHVNDDEETNHTEAEKSSSNIKDAEKTGVATASTVGVAKNDTENTVADEPSIHEGTEKTEPQHHIGNQTESNHDEDHDITSESVESAESVKQAPQSDDLTNDSNEDEIEQSLKEPATYKEDRRSSVVIDAEKHIEKTEEQSSDKNK</sequence>
<proteinExistence type="inferred from homology"/>
<keyword id="KW-1003">Cell membrane</keyword>
<keyword id="KW-0134">Cell wall</keyword>
<keyword id="KW-0472">Membrane</keyword>
<keyword id="KW-0964">Secreted</keyword>
<keyword id="KW-0812">Transmembrane</keyword>
<keyword id="KW-1133">Transmembrane helix</keyword>
<accession>Q99RT8</accession>
<feature type="chain" id="PRO_0000274824" description="Lysostaphin resistance protein A">
    <location>
        <begin position="1"/>
        <end position="419"/>
    </location>
</feature>
<feature type="transmembrane region" description="Helical" evidence="3">
    <location>
        <begin position="9"/>
        <end position="29"/>
    </location>
</feature>
<feature type="transmembrane region" description="Helical" evidence="3">
    <location>
        <begin position="41"/>
        <end position="61"/>
    </location>
</feature>
<feature type="transmembrane region" description="Helical" evidence="3">
    <location>
        <begin position="84"/>
        <end position="104"/>
    </location>
</feature>
<feature type="transmembrane region" description="Helical" evidence="3">
    <location>
        <begin position="118"/>
        <end position="138"/>
    </location>
</feature>
<feature type="transmembrane region" description="Helical" evidence="3">
    <location>
        <begin position="153"/>
        <end position="173"/>
    </location>
</feature>
<feature type="transmembrane region" description="Helical" evidence="3">
    <location>
        <begin position="175"/>
        <end position="195"/>
    </location>
</feature>
<feature type="transmembrane region" description="Helical" evidence="3">
    <location>
        <begin position="202"/>
        <end position="222"/>
    </location>
</feature>
<feature type="transmembrane region" description="Helical" evidence="3">
    <location>
        <begin position="231"/>
        <end position="251"/>
    </location>
</feature>
<feature type="region of interest" description="Disordered" evidence="4">
    <location>
        <begin position="273"/>
        <end position="419"/>
    </location>
</feature>
<feature type="compositionally biased region" description="Basic and acidic residues" evidence="4">
    <location>
        <begin position="282"/>
        <end position="299"/>
    </location>
</feature>
<feature type="compositionally biased region" description="Basic and acidic residues" evidence="4">
    <location>
        <begin position="323"/>
        <end position="336"/>
    </location>
</feature>
<feature type="compositionally biased region" description="Basic and acidic residues" evidence="4">
    <location>
        <begin position="344"/>
        <end position="353"/>
    </location>
</feature>
<feature type="compositionally biased region" description="Acidic residues" evidence="4">
    <location>
        <begin position="372"/>
        <end position="382"/>
    </location>
</feature>
<feature type="compositionally biased region" description="Basic and acidic residues" evidence="4">
    <location>
        <begin position="383"/>
        <end position="419"/>
    </location>
</feature>
<organism>
    <name type="scientific">Staphylococcus aureus (strain Mu50 / ATCC 700699)</name>
    <dbReference type="NCBI Taxonomy" id="158878"/>
    <lineage>
        <taxon>Bacteria</taxon>
        <taxon>Bacillati</taxon>
        <taxon>Bacillota</taxon>
        <taxon>Bacilli</taxon>
        <taxon>Bacillales</taxon>
        <taxon>Staphylococcaceae</taxon>
        <taxon>Staphylococcus</taxon>
    </lineage>
</organism>
<name>LYRA_STAAM</name>